<sequence length="207" mass="22465">MANYDVLKLDGTKSGSIELSDAVFGIEPNNSVLFEAINLQRASLRQGTHAVKNRSAVSGGGRKPWKQKGTGRARQGTIRAPQWRGGGIVFGPTPRSYAYKMPKKMRRLALRSALSFKAQENGLTVVDAFNFEAPKTKEFKNVLSTLEQPKKVLVVTENEDVNVELSARNIPGVQVTTAQGLNVLDITNADSLVITEAAAKKVEEVLG</sequence>
<protein>
    <recommendedName>
        <fullName evidence="1">Large ribosomal subunit protein uL4</fullName>
    </recommendedName>
    <alternativeName>
        <fullName evidence="3">50S ribosomal protein L4</fullName>
    </alternativeName>
</protein>
<dbReference type="EMBL" id="CP000736">
    <property type="protein sequence ID" value="ABR53142.1"/>
    <property type="molecule type" value="Genomic_DNA"/>
</dbReference>
<dbReference type="SMR" id="A6U3X4"/>
<dbReference type="KEGG" id="sah:SaurJH1_2317"/>
<dbReference type="HOGENOM" id="CLU_041575_5_2_9"/>
<dbReference type="GO" id="GO:1990904">
    <property type="term" value="C:ribonucleoprotein complex"/>
    <property type="evidence" value="ECO:0007669"/>
    <property type="project" value="UniProtKB-KW"/>
</dbReference>
<dbReference type="GO" id="GO:0005840">
    <property type="term" value="C:ribosome"/>
    <property type="evidence" value="ECO:0007669"/>
    <property type="project" value="UniProtKB-KW"/>
</dbReference>
<dbReference type="GO" id="GO:0019843">
    <property type="term" value="F:rRNA binding"/>
    <property type="evidence" value="ECO:0007669"/>
    <property type="project" value="UniProtKB-UniRule"/>
</dbReference>
<dbReference type="GO" id="GO:0003735">
    <property type="term" value="F:structural constituent of ribosome"/>
    <property type="evidence" value="ECO:0007669"/>
    <property type="project" value="InterPro"/>
</dbReference>
<dbReference type="GO" id="GO:0006412">
    <property type="term" value="P:translation"/>
    <property type="evidence" value="ECO:0007669"/>
    <property type="project" value="UniProtKB-UniRule"/>
</dbReference>
<dbReference type="FunFam" id="3.40.1370.10:FF:000003">
    <property type="entry name" value="50S ribosomal protein L4"/>
    <property type="match status" value="1"/>
</dbReference>
<dbReference type="Gene3D" id="3.40.1370.10">
    <property type="match status" value="1"/>
</dbReference>
<dbReference type="HAMAP" id="MF_01328_B">
    <property type="entry name" value="Ribosomal_uL4_B"/>
    <property type="match status" value="1"/>
</dbReference>
<dbReference type="InterPro" id="IPR002136">
    <property type="entry name" value="Ribosomal_uL4"/>
</dbReference>
<dbReference type="InterPro" id="IPR013005">
    <property type="entry name" value="Ribosomal_uL4-like"/>
</dbReference>
<dbReference type="InterPro" id="IPR023574">
    <property type="entry name" value="Ribosomal_uL4_dom_sf"/>
</dbReference>
<dbReference type="NCBIfam" id="TIGR03953">
    <property type="entry name" value="rplD_bact"/>
    <property type="match status" value="1"/>
</dbReference>
<dbReference type="PANTHER" id="PTHR10746">
    <property type="entry name" value="50S RIBOSOMAL PROTEIN L4"/>
    <property type="match status" value="1"/>
</dbReference>
<dbReference type="PANTHER" id="PTHR10746:SF6">
    <property type="entry name" value="LARGE RIBOSOMAL SUBUNIT PROTEIN UL4M"/>
    <property type="match status" value="1"/>
</dbReference>
<dbReference type="Pfam" id="PF00573">
    <property type="entry name" value="Ribosomal_L4"/>
    <property type="match status" value="1"/>
</dbReference>
<dbReference type="SUPFAM" id="SSF52166">
    <property type="entry name" value="Ribosomal protein L4"/>
    <property type="match status" value="1"/>
</dbReference>
<evidence type="ECO:0000255" key="1">
    <source>
        <dbReference type="HAMAP-Rule" id="MF_01328"/>
    </source>
</evidence>
<evidence type="ECO:0000256" key="2">
    <source>
        <dbReference type="SAM" id="MobiDB-lite"/>
    </source>
</evidence>
<evidence type="ECO:0000305" key="3"/>
<organism>
    <name type="scientific">Staphylococcus aureus (strain JH1)</name>
    <dbReference type="NCBI Taxonomy" id="359787"/>
    <lineage>
        <taxon>Bacteria</taxon>
        <taxon>Bacillati</taxon>
        <taxon>Bacillota</taxon>
        <taxon>Bacilli</taxon>
        <taxon>Bacillales</taxon>
        <taxon>Staphylococcaceae</taxon>
        <taxon>Staphylococcus</taxon>
    </lineage>
</organism>
<gene>
    <name evidence="1" type="primary">rplD</name>
    <name type="ordered locus">SaurJH1_2317</name>
</gene>
<proteinExistence type="inferred from homology"/>
<reference key="1">
    <citation type="submission" date="2007-06" db="EMBL/GenBank/DDBJ databases">
        <title>Complete sequence of chromosome of Staphylococcus aureus subsp. aureus JH1.</title>
        <authorList>
            <consortium name="US DOE Joint Genome Institute"/>
            <person name="Copeland A."/>
            <person name="Lucas S."/>
            <person name="Lapidus A."/>
            <person name="Barry K."/>
            <person name="Detter J.C."/>
            <person name="Glavina del Rio T."/>
            <person name="Hammon N."/>
            <person name="Israni S."/>
            <person name="Dalin E."/>
            <person name="Tice H."/>
            <person name="Pitluck S."/>
            <person name="Chain P."/>
            <person name="Malfatti S."/>
            <person name="Shin M."/>
            <person name="Vergez L."/>
            <person name="Schmutz J."/>
            <person name="Larimer F."/>
            <person name="Land M."/>
            <person name="Hauser L."/>
            <person name="Kyrpides N."/>
            <person name="Ivanova N."/>
            <person name="Tomasz A."/>
            <person name="Richardson P."/>
        </authorList>
    </citation>
    <scope>NUCLEOTIDE SEQUENCE [LARGE SCALE GENOMIC DNA]</scope>
    <source>
        <strain>JH1</strain>
    </source>
</reference>
<keyword id="KW-0687">Ribonucleoprotein</keyword>
<keyword id="KW-0689">Ribosomal protein</keyword>
<keyword id="KW-0694">RNA-binding</keyword>
<keyword id="KW-0699">rRNA-binding</keyword>
<accession>A6U3X4</accession>
<comment type="function">
    <text evidence="1">One of the primary rRNA binding proteins, this protein initially binds near the 5'-end of the 23S rRNA. It is important during the early stages of 50S assembly. It makes multiple contacts with different domains of the 23S rRNA in the assembled 50S subunit and ribosome.</text>
</comment>
<comment type="function">
    <text evidence="1">Forms part of the polypeptide exit tunnel.</text>
</comment>
<comment type="subunit">
    <text evidence="1">Part of the 50S ribosomal subunit.</text>
</comment>
<comment type="similarity">
    <text evidence="1">Belongs to the universal ribosomal protein uL4 family.</text>
</comment>
<name>RL4_STAA2</name>
<feature type="chain" id="PRO_1000086539" description="Large ribosomal subunit protein uL4">
    <location>
        <begin position="1"/>
        <end position="207"/>
    </location>
</feature>
<feature type="region of interest" description="Disordered" evidence="2">
    <location>
        <begin position="50"/>
        <end position="76"/>
    </location>
</feature>